<proteinExistence type="evidence at protein level"/>
<reference key="1">
    <citation type="journal article" date="1998" name="Plant Mol. Biol.">
        <title>Molecular characterization of a cytokinin-inducible periwinkle protein showing sequence homology with pathogenesis-related proteins and the Bet v 1 allergen family.</title>
        <authorList>
            <person name="Carpin S."/>
            <person name="Laffer S."/>
            <person name="Schoentgen F."/>
            <person name="Valenta R."/>
            <person name="Chenieux J.-C."/>
            <person name="Rideau M."/>
            <person name="Hamdi S."/>
        </authorList>
    </citation>
    <scope>NUCLEOTIDE SEQUENCE [MRNA] OF 18-157</scope>
    <scope>PROTEIN SEQUENCE OF 1-30</scope>
    <scope>INDUCTION</scope>
    <source>
        <strain>cv. Little Pinkie</strain>
    </source>
</reference>
<dbReference type="EMBL" id="Y10612">
    <property type="protein sequence ID" value="CAA71619.1"/>
    <property type="molecule type" value="mRNA"/>
</dbReference>
<dbReference type="PIR" id="T10059">
    <property type="entry name" value="T10059"/>
</dbReference>
<dbReference type="SMR" id="P93105"/>
<dbReference type="GlyCosmos" id="P93105">
    <property type="glycosylation" value="2 sites, No reported glycans"/>
</dbReference>
<dbReference type="GO" id="GO:0005737">
    <property type="term" value="C:cytoplasm"/>
    <property type="evidence" value="ECO:0007669"/>
    <property type="project" value="TreeGrafter"/>
</dbReference>
<dbReference type="GO" id="GO:0005634">
    <property type="term" value="C:nucleus"/>
    <property type="evidence" value="ECO:0007669"/>
    <property type="project" value="TreeGrafter"/>
</dbReference>
<dbReference type="GO" id="GO:0010427">
    <property type="term" value="F:abscisic acid binding"/>
    <property type="evidence" value="ECO:0007669"/>
    <property type="project" value="InterPro"/>
</dbReference>
<dbReference type="GO" id="GO:0004864">
    <property type="term" value="F:protein phosphatase inhibitor activity"/>
    <property type="evidence" value="ECO:0007669"/>
    <property type="project" value="InterPro"/>
</dbReference>
<dbReference type="GO" id="GO:0038023">
    <property type="term" value="F:signaling receptor activity"/>
    <property type="evidence" value="ECO:0007669"/>
    <property type="project" value="InterPro"/>
</dbReference>
<dbReference type="GO" id="GO:0009738">
    <property type="term" value="P:abscisic acid-activated signaling pathway"/>
    <property type="evidence" value="ECO:0007669"/>
    <property type="project" value="InterPro"/>
</dbReference>
<dbReference type="GO" id="GO:0006952">
    <property type="term" value="P:defense response"/>
    <property type="evidence" value="ECO:0007669"/>
    <property type="project" value="UniProtKB-KW"/>
</dbReference>
<dbReference type="CDD" id="cd07816">
    <property type="entry name" value="Bet_v1-like"/>
    <property type="match status" value="1"/>
</dbReference>
<dbReference type="FunFam" id="3.30.530.20:FF:000007">
    <property type="entry name" value="Major pollen allergen Bet v 1-A"/>
    <property type="match status" value="1"/>
</dbReference>
<dbReference type="Gene3D" id="3.30.530.20">
    <property type="match status" value="1"/>
</dbReference>
<dbReference type="InterPro" id="IPR000916">
    <property type="entry name" value="Bet_v_I/MLP"/>
</dbReference>
<dbReference type="InterPro" id="IPR024949">
    <property type="entry name" value="Bet_v_I_allergen"/>
</dbReference>
<dbReference type="InterPro" id="IPR050279">
    <property type="entry name" value="Plant_def-hormone_signal"/>
</dbReference>
<dbReference type="InterPro" id="IPR023393">
    <property type="entry name" value="START-like_dom_sf"/>
</dbReference>
<dbReference type="PANTHER" id="PTHR31213">
    <property type="entry name" value="OS08G0374000 PROTEIN-RELATED"/>
    <property type="match status" value="1"/>
</dbReference>
<dbReference type="PANTHER" id="PTHR31213:SF55">
    <property type="entry name" value="STRESS-INDUCED PROTEIN SAM22"/>
    <property type="match status" value="1"/>
</dbReference>
<dbReference type="Pfam" id="PF00407">
    <property type="entry name" value="Bet_v_1"/>
    <property type="match status" value="1"/>
</dbReference>
<dbReference type="PRINTS" id="PR00634">
    <property type="entry name" value="BETALLERGEN"/>
</dbReference>
<dbReference type="SMART" id="SM01037">
    <property type="entry name" value="Bet_v_1"/>
    <property type="match status" value="1"/>
</dbReference>
<dbReference type="SUPFAM" id="SSF55961">
    <property type="entry name" value="Bet v1-like"/>
    <property type="match status" value="1"/>
</dbReference>
<name>IPRT1_CATRO</name>
<gene>
    <name type="primary">PCKR3</name>
</gene>
<sequence>MGVISYDMEIKSSLSAAKLFKAFVLDVGTLINKALPNVIKSVEILQGDGGAGTIKLVHFGEGGPVPSVKHHVEELDKDNMSYKYSIVDGEALMPGLQSISYVIKIEPSGHGSVCKHNTTFHFKAGSNINEDEIKAGKERAAEMIKAVEAYVQANPDY</sequence>
<accession>P93105</accession>
<comment type="induction">
    <text evidence="2">By cytokinin treatment.</text>
</comment>
<comment type="miscellaneous">
    <text>Related to intracellular pathogenesis-related (IPR) plant proteins and to other allergen families but has no allergenic properties.</text>
</comment>
<comment type="similarity">
    <text evidence="3">Belongs to the BetVI family.</text>
</comment>
<feature type="chain" id="PRO_0000270629" description="Probable intracellular pathogenesis-related protein T1">
    <location>
        <begin position="1"/>
        <end position="157"/>
    </location>
</feature>
<feature type="glycosylation site" description="N-linked (GlcNAc...) asparagine" evidence="1">
    <location>
        <position position="79"/>
    </location>
</feature>
<feature type="glycosylation site" description="N-linked (GlcNAc...) asparagine" evidence="1">
    <location>
        <position position="117"/>
    </location>
</feature>
<feature type="sequence conflict" description="In Ref. 1; CAA71619." evidence="3" ref="1">
    <original>L</original>
    <variation>V</variation>
    <location>
        <position position="19"/>
    </location>
</feature>
<organism>
    <name type="scientific">Catharanthus roseus</name>
    <name type="common">Madagascar periwinkle</name>
    <name type="synonym">Vinca rosea</name>
    <dbReference type="NCBI Taxonomy" id="4058"/>
    <lineage>
        <taxon>Eukaryota</taxon>
        <taxon>Viridiplantae</taxon>
        <taxon>Streptophyta</taxon>
        <taxon>Embryophyta</taxon>
        <taxon>Tracheophyta</taxon>
        <taxon>Spermatophyta</taxon>
        <taxon>Magnoliopsida</taxon>
        <taxon>eudicotyledons</taxon>
        <taxon>Gunneridae</taxon>
        <taxon>Pentapetalae</taxon>
        <taxon>asterids</taxon>
        <taxon>lamiids</taxon>
        <taxon>Gentianales</taxon>
        <taxon>Apocynaceae</taxon>
        <taxon>Rauvolfioideae</taxon>
        <taxon>Vinceae</taxon>
        <taxon>Catharanthinae</taxon>
        <taxon>Catharanthus</taxon>
    </lineage>
</organism>
<evidence type="ECO:0000255" key="1"/>
<evidence type="ECO:0000269" key="2">
    <source>
    </source>
</evidence>
<evidence type="ECO:0000305" key="3"/>
<keyword id="KW-0903">Direct protein sequencing</keyword>
<keyword id="KW-0325">Glycoprotein</keyword>
<keyword id="KW-0568">Pathogenesis-related protein</keyword>
<keyword id="KW-0611">Plant defense</keyword>
<protein>
    <recommendedName>
        <fullName>Probable intracellular pathogenesis-related protein T1</fullName>
    </recommendedName>
</protein>